<sequence length="135" mass="15604">MNYFLKAPILGFEHINEVRLEKIDSLFSRLISQTNSPMALDMVLVNPYCLREYSFVIPKYIELLLELDSHSKVEVYCVVVLQKNLEDSMVNFLAPLVFNSKNGFGAQVALSMMDYPDFGFRDPLKSFVIQERERA</sequence>
<feature type="chain" id="PRO_0000272999" description="Flagellar assembly factor FliW 1">
    <location>
        <begin position="1"/>
        <end position="135"/>
    </location>
</feature>
<dbReference type="EMBL" id="AE000511">
    <property type="protein sequence ID" value="AAD08203.1"/>
    <property type="molecule type" value="Genomic_DNA"/>
</dbReference>
<dbReference type="PIR" id="B64664">
    <property type="entry name" value="B64664"/>
</dbReference>
<dbReference type="RefSeq" id="NP_207945.1">
    <property type="nucleotide sequence ID" value="NC_000915.1"/>
</dbReference>
<dbReference type="SMR" id="O25769"/>
<dbReference type="DIP" id="DIP-3307N"/>
<dbReference type="IntAct" id="O25769">
    <property type="interactions" value="6"/>
</dbReference>
<dbReference type="MINT" id="O25769"/>
<dbReference type="STRING" id="85962.HP_1154"/>
<dbReference type="PaxDb" id="85962-C694_05960"/>
<dbReference type="DNASU" id="899914"/>
<dbReference type="EnsemblBacteria" id="AAD08203">
    <property type="protein sequence ID" value="AAD08203"/>
    <property type="gene ID" value="HP_1154"/>
</dbReference>
<dbReference type="KEGG" id="heo:C694_05960"/>
<dbReference type="KEGG" id="hpy:HP_1154"/>
<dbReference type="PATRIC" id="fig|85962.47.peg.1238"/>
<dbReference type="eggNOG" id="COG1699">
    <property type="taxonomic scope" value="Bacteria"/>
</dbReference>
<dbReference type="InParanoid" id="O25769"/>
<dbReference type="OrthoDB" id="5372942at2"/>
<dbReference type="PhylomeDB" id="O25769"/>
<dbReference type="Proteomes" id="UP000000429">
    <property type="component" value="Chromosome"/>
</dbReference>
<dbReference type="GO" id="GO:0005737">
    <property type="term" value="C:cytoplasm"/>
    <property type="evidence" value="ECO:0007669"/>
    <property type="project" value="UniProtKB-SubCell"/>
</dbReference>
<dbReference type="GO" id="GO:0044780">
    <property type="term" value="P:bacterial-type flagellum assembly"/>
    <property type="evidence" value="ECO:0007669"/>
    <property type="project" value="UniProtKB-UniRule"/>
</dbReference>
<dbReference type="GO" id="GO:0006417">
    <property type="term" value="P:regulation of translation"/>
    <property type="evidence" value="ECO:0007669"/>
    <property type="project" value="UniProtKB-KW"/>
</dbReference>
<dbReference type="Gene3D" id="2.30.290.10">
    <property type="entry name" value="BH3618-like"/>
    <property type="match status" value="1"/>
</dbReference>
<dbReference type="HAMAP" id="MF_01185">
    <property type="entry name" value="FliW"/>
    <property type="match status" value="1"/>
</dbReference>
<dbReference type="InterPro" id="IPR003775">
    <property type="entry name" value="Flagellar_assembly_factor_FliW"/>
</dbReference>
<dbReference type="InterPro" id="IPR024046">
    <property type="entry name" value="Flagellar_assmbl_FliW_dom_sf"/>
</dbReference>
<dbReference type="NCBIfam" id="NF009791">
    <property type="entry name" value="PRK13283.1"/>
    <property type="match status" value="1"/>
</dbReference>
<dbReference type="PANTHER" id="PTHR39190">
    <property type="entry name" value="FLAGELLAR ASSEMBLY FACTOR FLIW"/>
    <property type="match status" value="1"/>
</dbReference>
<dbReference type="PANTHER" id="PTHR39190:SF1">
    <property type="entry name" value="FLAGELLAR ASSEMBLY FACTOR FLIW"/>
    <property type="match status" value="1"/>
</dbReference>
<dbReference type="Pfam" id="PF02623">
    <property type="entry name" value="FliW"/>
    <property type="match status" value="1"/>
</dbReference>
<dbReference type="SUPFAM" id="SSF141457">
    <property type="entry name" value="BH3618-like"/>
    <property type="match status" value="1"/>
</dbReference>
<accession>O25769</accession>
<gene>
    <name evidence="1" type="primary">fliW1</name>
    <name type="ordered locus">HP_1154</name>
</gene>
<keyword id="KW-1005">Bacterial flagellum biogenesis</keyword>
<keyword id="KW-0143">Chaperone</keyword>
<keyword id="KW-0963">Cytoplasm</keyword>
<keyword id="KW-1185">Reference proteome</keyword>
<keyword id="KW-0810">Translation regulation</keyword>
<protein>
    <recommendedName>
        <fullName evidence="1">Flagellar assembly factor FliW 1</fullName>
    </recommendedName>
</protein>
<reference key="1">
    <citation type="journal article" date="1997" name="Nature">
        <title>The complete genome sequence of the gastric pathogen Helicobacter pylori.</title>
        <authorList>
            <person name="Tomb J.-F."/>
            <person name="White O."/>
            <person name="Kerlavage A.R."/>
            <person name="Clayton R.A."/>
            <person name="Sutton G.G."/>
            <person name="Fleischmann R.D."/>
            <person name="Ketchum K.A."/>
            <person name="Klenk H.-P."/>
            <person name="Gill S.R."/>
            <person name="Dougherty B.A."/>
            <person name="Nelson K.E."/>
            <person name="Quackenbush J."/>
            <person name="Zhou L."/>
            <person name="Kirkness E.F."/>
            <person name="Peterson S.N."/>
            <person name="Loftus B.J."/>
            <person name="Richardson D.L."/>
            <person name="Dodson R.J."/>
            <person name="Khalak H.G."/>
            <person name="Glodek A."/>
            <person name="McKenney K."/>
            <person name="FitzGerald L.M."/>
            <person name="Lee N."/>
            <person name="Adams M.D."/>
            <person name="Hickey E.K."/>
            <person name="Berg D.E."/>
            <person name="Gocayne J.D."/>
            <person name="Utterback T.R."/>
            <person name="Peterson J.D."/>
            <person name="Kelley J.M."/>
            <person name="Cotton M.D."/>
            <person name="Weidman J.F."/>
            <person name="Fujii C."/>
            <person name="Bowman C."/>
            <person name="Watthey L."/>
            <person name="Wallin E."/>
            <person name="Hayes W.S."/>
            <person name="Borodovsky M."/>
            <person name="Karp P.D."/>
            <person name="Smith H.O."/>
            <person name="Fraser C.M."/>
            <person name="Venter J.C."/>
        </authorList>
    </citation>
    <scope>NUCLEOTIDE SEQUENCE [LARGE SCALE GENOMIC DNA]</scope>
    <source>
        <strain>ATCC 700392 / 26695</strain>
    </source>
</reference>
<reference key="2">
    <citation type="journal article" date="2001" name="Nature">
        <title>The protein-protein interaction map of Helicobacter pylori.</title>
        <authorList>
            <person name="Rain J.-C."/>
            <person name="Selig L."/>
            <person name="De Reuse H."/>
            <person name="Battaglia V."/>
            <person name="Reverdy C."/>
            <person name="Simon S."/>
            <person name="Lenzen G."/>
            <person name="Petel F."/>
            <person name="Wojcik J."/>
            <person name="Schaechter V."/>
            <person name="Chemama Y."/>
            <person name="Labigne A."/>
            <person name="Legrain P."/>
        </authorList>
    </citation>
    <scope>BINDING TO FLAGELLIN</scope>
</reference>
<proteinExistence type="evidence at protein level"/>
<evidence type="ECO:0000255" key="1">
    <source>
        <dbReference type="HAMAP-Rule" id="MF_01185"/>
    </source>
</evidence>
<evidence type="ECO:0000269" key="2">
    <source>
    </source>
</evidence>
<evidence type="ECO:0000305" key="3"/>
<organism>
    <name type="scientific">Helicobacter pylori (strain ATCC 700392 / 26695)</name>
    <name type="common">Campylobacter pylori</name>
    <dbReference type="NCBI Taxonomy" id="85962"/>
    <lineage>
        <taxon>Bacteria</taxon>
        <taxon>Pseudomonadati</taxon>
        <taxon>Campylobacterota</taxon>
        <taxon>Epsilonproteobacteria</taxon>
        <taxon>Campylobacterales</taxon>
        <taxon>Helicobacteraceae</taxon>
        <taxon>Helicobacter</taxon>
    </lineage>
</organism>
<name>FLIW1_HELPY</name>
<comment type="function">
    <text evidence="1">Acts as an anti-CsrA protein, binds CsrA and prevents it from repressing translation of its target genes, one of which is flagellin. Binds to flagellin and participates in the assembly of the flagellum.</text>
</comment>
<comment type="subunit">
    <text evidence="1 2">Interacts with translational regulator CsrA and flagellin(s).</text>
</comment>
<comment type="subcellular location">
    <subcellularLocation>
        <location evidence="1">Cytoplasm</location>
    </subcellularLocation>
</comment>
<comment type="similarity">
    <text evidence="1 3">Belongs to the FliW family.</text>
</comment>